<keyword id="KW-1003">Cell membrane</keyword>
<keyword id="KW-0963">Cytoplasm</keyword>
<keyword id="KW-1017">Isopeptide bond</keyword>
<keyword id="KW-0446">Lipid-binding</keyword>
<keyword id="KW-0472">Membrane</keyword>
<keyword id="KW-0539">Nucleus</keyword>
<keyword id="KW-0597">Phosphoprotein</keyword>
<keyword id="KW-1267">Proteomics identification</keyword>
<keyword id="KW-1185">Reference proteome</keyword>
<keyword id="KW-0677">Repeat</keyword>
<keyword id="KW-0832">Ubl conjugation</keyword>
<gene>
    <name type="primary">PLEKHA2</name>
    <name type="synonym">TAPP2</name>
</gene>
<comment type="function">
    <text evidence="1">Binds specifically to phosphatidylinositol 3,4-diphosphate (PtdIns3,4P2), but not to other phosphoinositides. May recruit other proteins to the plasma membrane (By similarity).</text>
</comment>
<comment type="subunit">
    <text evidence="1">Binds MPDZ and PTPN13.</text>
</comment>
<comment type="interaction">
    <interactant intactId="EBI-4401947">
        <id>Q9HB19</id>
    </interactant>
    <interactant intactId="EBI-3866319">
        <id>Q9Y2V7</id>
        <label>COG6</label>
    </interactant>
    <organismsDiffer>false</organismsDiffer>
    <experiments>3</experiments>
</comment>
<comment type="interaction">
    <interactant intactId="EBI-4401947">
        <id>Q9HB19</id>
    </interactant>
    <interactant intactId="EBI-80426">
        <id>Q15700</id>
        <label>DLG2</label>
    </interactant>
    <organismsDiffer>false</organismsDiffer>
    <experiments>3</experiments>
</comment>
<comment type="interaction">
    <interactant intactId="EBI-4401947">
        <id>Q9HB19</id>
    </interactant>
    <interactant intactId="EBI-80440">
        <id>Q92796</id>
        <label>DLG3</label>
    </interactant>
    <organismsDiffer>false</organismsDiffer>
    <experiments>3</experiments>
</comment>
<comment type="interaction">
    <interactant intactId="EBI-4401947">
        <id>Q9HB19</id>
    </interactant>
    <interactant intactId="EBI-1175354">
        <id>Q9H6Z9</id>
        <label>EGLN3</label>
    </interactant>
    <organismsDiffer>false</organismsDiffer>
    <experiments>3</experiments>
</comment>
<comment type="interaction">
    <interactant intactId="EBI-4401947">
        <id>Q9HB19</id>
    </interactant>
    <interactant intactId="EBI-750641">
        <id>Q5TD97</id>
        <label>FHL5</label>
    </interactant>
    <organismsDiffer>false</organismsDiffer>
    <experiments>3</experiments>
</comment>
<comment type="interaction">
    <interactant intactId="EBI-4401947">
        <id>Q9HB19</id>
    </interactant>
    <interactant intactId="EBI-373132">
        <id>O14908</id>
        <label>GIPC1</label>
    </interactant>
    <organismsDiffer>false</organismsDiffer>
    <experiments>3</experiments>
</comment>
<comment type="interaction">
    <interactant intactId="EBI-4401947">
        <id>Q9HB19</id>
    </interactant>
    <interactant intactId="EBI-712067">
        <id>Q8TF65</id>
        <label>GIPC2</label>
    </interactant>
    <organismsDiffer>false</organismsDiffer>
    <experiments>8</experiments>
</comment>
<comment type="interaction">
    <interactant intactId="EBI-4401947">
        <id>Q9HB19</id>
    </interactant>
    <interactant intactId="EBI-12372489">
        <id>Q8TF64</id>
        <label>GIPC3</label>
    </interactant>
    <organismsDiffer>false</organismsDiffer>
    <experiments>3</experiments>
</comment>
<comment type="interaction">
    <interactant intactId="EBI-4401947">
        <id>Q9HB19</id>
    </interactant>
    <interactant intactId="EBI-618309">
        <id>Q08379</id>
        <label>GOLGA2</label>
    </interactant>
    <organismsDiffer>false</organismsDiffer>
    <experiments>3</experiments>
</comment>
<comment type="interaction">
    <interactant intactId="EBI-4401947">
        <id>Q9HB19</id>
    </interactant>
    <interactant intactId="EBI-7116203">
        <id>O75031</id>
        <label>HSF2BP</label>
    </interactant>
    <organismsDiffer>false</organismsDiffer>
    <experiments>3</experiments>
</comment>
<comment type="interaction">
    <interactant intactId="EBI-4401947">
        <id>Q9HB19</id>
    </interactant>
    <interactant intactId="EBI-2556193">
        <id>Q63ZY3</id>
        <label>KANK2</label>
    </interactant>
    <organismsDiffer>false</organismsDiffer>
    <experiments>3</experiments>
</comment>
<comment type="interaction">
    <interactant intactId="EBI-4401947">
        <id>Q9HB19</id>
    </interactant>
    <interactant intactId="EBI-739832">
        <id>Q8TBB1</id>
        <label>LNX1</label>
    </interactant>
    <organismsDiffer>false</organismsDiffer>
    <experiments>5</experiments>
</comment>
<comment type="interaction">
    <interactant intactId="EBI-4401947">
        <id>Q9HB19</id>
    </interactant>
    <interactant intactId="EBI-748182">
        <id>Q8TC57</id>
        <label>M1AP</label>
    </interactant>
    <organismsDiffer>false</organismsDiffer>
    <experiments>6</experiments>
</comment>
<comment type="interaction">
    <interactant intactId="EBI-4401947">
        <id>Q9HB19</id>
    </interactant>
    <interactant intactId="EBI-19763427">
        <id>Q9NSN8</id>
        <label>SNTG1</label>
    </interactant>
    <organismsDiffer>false</organismsDiffer>
    <experiments>3</experiments>
</comment>
<comment type="interaction">
    <interactant intactId="EBI-4401947">
        <id>Q9HB19</id>
    </interactant>
    <interactant intactId="EBI-11139477">
        <id>Q96N21</id>
        <label>TEPSIN</label>
    </interactant>
    <organismsDiffer>false</organismsDiffer>
    <experiments>3</experiments>
</comment>
<comment type="interaction">
    <interactant intactId="EBI-4401947">
        <id>Q9HB19</id>
    </interactant>
    <interactant intactId="EBI-740098">
        <id>P36406</id>
        <label>TRIM23</label>
    </interactant>
    <organismsDiffer>false</organismsDiffer>
    <experiments>3</experiments>
</comment>
<comment type="subcellular location">
    <subcellularLocation>
        <location evidence="1">Cytoplasm</location>
    </subcellularLocation>
    <subcellularLocation>
        <location evidence="1">Cell membrane</location>
        <topology evidence="1">Peripheral membrane protein</topology>
    </subcellularLocation>
    <subcellularLocation>
        <location evidence="1">Nucleus</location>
    </subcellularLocation>
    <text evidence="1">Locates to the plasma membrane after treatments that stimulate the production of PtdIns3,4P2.</text>
</comment>
<comment type="tissue specificity">
    <text>Highly expressed in heart, kidney, spleen and peripheral blood leukocytes. Detected at lower levels in brain, skeletal muscle, colon, thymus, liver, small intestine, placenta and lung.</text>
</comment>
<feature type="chain" id="PRO_0000053876" description="Pleckstrin homology domain-containing family A member 2">
    <location>
        <begin position="1"/>
        <end position="425"/>
    </location>
</feature>
<feature type="domain" description="PH 1" evidence="2">
    <location>
        <begin position="7"/>
        <end position="113"/>
    </location>
</feature>
<feature type="domain" description="PH 2" evidence="2">
    <location>
        <begin position="198"/>
        <end position="298"/>
    </location>
</feature>
<feature type="region of interest" description="Disordered" evidence="3">
    <location>
        <begin position="312"/>
        <end position="332"/>
    </location>
</feature>
<feature type="region of interest" description="Disordered" evidence="3">
    <location>
        <begin position="352"/>
        <end position="425"/>
    </location>
</feature>
<feature type="compositionally biased region" description="Low complexity" evidence="3">
    <location>
        <begin position="312"/>
        <end position="330"/>
    </location>
</feature>
<feature type="compositionally biased region" description="Basic and acidic residues" evidence="3">
    <location>
        <begin position="400"/>
        <end position="410"/>
    </location>
</feature>
<feature type="modified residue" description="Phosphoserine" evidence="6 7">
    <location>
        <position position="184"/>
    </location>
</feature>
<feature type="modified residue" description="Phosphoserine" evidence="7">
    <location>
        <position position="314"/>
    </location>
</feature>
<feature type="modified residue" description="Phosphoserine" evidence="5 7">
    <location>
        <position position="349"/>
    </location>
</feature>
<feature type="cross-link" description="Glycyl lysine isopeptide (Lys-Gly) (interchain with G-Cter in SUMO2)" evidence="8">
    <location>
        <position position="141"/>
    </location>
</feature>
<feature type="sequence variant" id="VAR_061516" description="In dbSNP:rs59439576.">
    <original>I</original>
    <variation>N</variation>
    <location>
        <position position="186"/>
    </location>
</feature>
<feature type="sequence conflict" description="In Ref. 3; AAG15201." evidence="4" ref="3">
    <original>L</original>
    <variation>F</variation>
    <location>
        <position position="244"/>
    </location>
</feature>
<dbReference type="EMBL" id="AK291842">
    <property type="protein sequence ID" value="BAF84531.1"/>
    <property type="molecule type" value="mRNA"/>
</dbReference>
<dbReference type="EMBL" id="AC067817">
    <property type="status" value="NOT_ANNOTATED_CDS"/>
    <property type="molecule type" value="Genomic_DNA"/>
</dbReference>
<dbReference type="EMBL" id="AC108863">
    <property type="status" value="NOT_ANNOTATED_CDS"/>
    <property type="molecule type" value="Genomic_DNA"/>
</dbReference>
<dbReference type="EMBL" id="KF495718">
    <property type="status" value="NOT_ANNOTATED_CDS"/>
    <property type="molecule type" value="Genomic_DNA"/>
</dbReference>
<dbReference type="EMBL" id="AF286164">
    <property type="protein sequence ID" value="AAG15201.1"/>
    <property type="molecule type" value="mRNA"/>
</dbReference>
<dbReference type="CCDS" id="CCDS75732.1"/>
<dbReference type="RefSeq" id="NP_067636.1">
    <property type="nucleotide sequence ID" value="NM_021623.2"/>
</dbReference>
<dbReference type="RefSeq" id="XP_011542907.1">
    <property type="nucleotide sequence ID" value="XM_011544605.4"/>
</dbReference>
<dbReference type="RefSeq" id="XP_011542908.1">
    <property type="nucleotide sequence ID" value="XM_011544606.3"/>
</dbReference>
<dbReference type="RefSeq" id="XP_011542909.1">
    <property type="nucleotide sequence ID" value="XM_011544607.4"/>
</dbReference>
<dbReference type="RefSeq" id="XP_047278023.1">
    <property type="nucleotide sequence ID" value="XM_047422067.1"/>
</dbReference>
<dbReference type="RefSeq" id="XP_047278024.1">
    <property type="nucleotide sequence ID" value="XM_047422068.1"/>
</dbReference>
<dbReference type="RefSeq" id="XP_054216921.1">
    <property type="nucleotide sequence ID" value="XM_054360946.1"/>
</dbReference>
<dbReference type="RefSeq" id="XP_054216922.1">
    <property type="nucleotide sequence ID" value="XM_054360947.1"/>
</dbReference>
<dbReference type="RefSeq" id="XP_054216923.1">
    <property type="nucleotide sequence ID" value="XM_054360948.1"/>
</dbReference>
<dbReference type="RefSeq" id="XP_054216924.1">
    <property type="nucleotide sequence ID" value="XM_054360949.1"/>
</dbReference>
<dbReference type="RefSeq" id="XP_054216925.1">
    <property type="nucleotide sequence ID" value="XM_054360950.1"/>
</dbReference>
<dbReference type="RefSeq" id="XP_054216926.1">
    <property type="nucleotide sequence ID" value="XM_054360951.1"/>
</dbReference>
<dbReference type="RefSeq" id="XP_054216927.1">
    <property type="nucleotide sequence ID" value="XM_054360952.1"/>
</dbReference>
<dbReference type="SMR" id="Q9HB19"/>
<dbReference type="BioGRID" id="121881">
    <property type="interactions" value="97"/>
</dbReference>
<dbReference type="FunCoup" id="Q9HB19">
    <property type="interactions" value="314"/>
</dbReference>
<dbReference type="IntAct" id="Q9HB19">
    <property type="interactions" value="43"/>
</dbReference>
<dbReference type="MINT" id="Q9HB19"/>
<dbReference type="STRING" id="9606.ENSP00000482228"/>
<dbReference type="iPTMnet" id="Q9HB19"/>
<dbReference type="MetOSite" id="Q9HB19"/>
<dbReference type="PhosphoSitePlus" id="Q9HB19"/>
<dbReference type="BioMuta" id="PLEKHA2"/>
<dbReference type="DMDM" id="84028237"/>
<dbReference type="CPTAC" id="CPTAC-992"/>
<dbReference type="jPOST" id="Q9HB19"/>
<dbReference type="MassIVE" id="Q9HB19"/>
<dbReference type="PaxDb" id="9606-ENSP00000482228"/>
<dbReference type="PeptideAtlas" id="Q9HB19"/>
<dbReference type="ProteomicsDB" id="81472"/>
<dbReference type="Pumba" id="Q9HB19"/>
<dbReference type="Antibodypedia" id="1200">
    <property type="antibodies" value="18 antibodies from 9 providers"/>
</dbReference>
<dbReference type="DNASU" id="59339"/>
<dbReference type="Ensembl" id="ENST00000617275.5">
    <property type="protein sequence ID" value="ENSP00000482228.1"/>
    <property type="gene ID" value="ENSG00000169499.15"/>
</dbReference>
<dbReference type="GeneID" id="59339"/>
<dbReference type="KEGG" id="hsa:59339"/>
<dbReference type="MANE-Select" id="ENST00000617275.5">
    <property type="protein sequence ID" value="ENSP00000482228.1"/>
    <property type="RefSeq nucleotide sequence ID" value="NM_021623.2"/>
    <property type="RefSeq protein sequence ID" value="NP_067636.1"/>
</dbReference>
<dbReference type="AGR" id="HGNC:14336"/>
<dbReference type="CTD" id="59339"/>
<dbReference type="DisGeNET" id="59339"/>
<dbReference type="GeneCards" id="PLEKHA2"/>
<dbReference type="HGNC" id="HGNC:14336">
    <property type="gene designation" value="PLEKHA2"/>
</dbReference>
<dbReference type="MIM" id="607773">
    <property type="type" value="gene"/>
</dbReference>
<dbReference type="neXtProt" id="NX_Q9HB19"/>
<dbReference type="OpenTargets" id="ENSG00000169499"/>
<dbReference type="PharmGKB" id="PA33402"/>
<dbReference type="VEuPathDB" id="HostDB:ENSG00000169499"/>
<dbReference type="eggNOG" id="ENOG502QV0M">
    <property type="taxonomic scope" value="Eukaryota"/>
</dbReference>
<dbReference type="GeneTree" id="ENSGT00940000158064"/>
<dbReference type="HOGENOM" id="CLU_055135_1_0_1"/>
<dbReference type="InParanoid" id="Q9HB19"/>
<dbReference type="OMA" id="KCHPKEM"/>
<dbReference type="OrthoDB" id="185175at2759"/>
<dbReference type="PAN-GO" id="Q9HB19">
    <property type="GO annotations" value="3 GO annotations based on evolutionary models"/>
</dbReference>
<dbReference type="PhylomeDB" id="Q9HB19"/>
<dbReference type="TreeFam" id="TF329516"/>
<dbReference type="PathwayCommons" id="Q9HB19"/>
<dbReference type="Reactome" id="R-HSA-1660499">
    <property type="pathway name" value="Synthesis of PIPs at the plasma membrane"/>
</dbReference>
<dbReference type="SignaLink" id="Q9HB19"/>
<dbReference type="BioGRID-ORCS" id="59339">
    <property type="hits" value="12 hits in 363 CRISPR screens"/>
</dbReference>
<dbReference type="ChiTaRS" id="PLEKHA2">
    <property type="organism name" value="human"/>
</dbReference>
<dbReference type="GenomeRNAi" id="59339"/>
<dbReference type="Pharos" id="Q9HB19">
    <property type="development level" value="Tbio"/>
</dbReference>
<dbReference type="PRO" id="PR:Q9HB19"/>
<dbReference type="Proteomes" id="UP000005640">
    <property type="component" value="Chromosome 8"/>
</dbReference>
<dbReference type="RNAct" id="Q9HB19">
    <property type="molecule type" value="protein"/>
</dbReference>
<dbReference type="Bgee" id="ENSG00000169499">
    <property type="expression patterns" value="Expressed in synovial joint and 190 other cell types or tissues"/>
</dbReference>
<dbReference type="GO" id="GO:0005737">
    <property type="term" value="C:cytoplasm"/>
    <property type="evidence" value="ECO:0000314"/>
    <property type="project" value="UniProtKB"/>
</dbReference>
<dbReference type="GO" id="GO:0016020">
    <property type="term" value="C:membrane"/>
    <property type="evidence" value="ECO:0000314"/>
    <property type="project" value="UniProtKB"/>
</dbReference>
<dbReference type="GO" id="GO:0005634">
    <property type="term" value="C:nucleus"/>
    <property type="evidence" value="ECO:0007669"/>
    <property type="project" value="UniProtKB-SubCell"/>
</dbReference>
<dbReference type="GO" id="GO:0005886">
    <property type="term" value="C:plasma membrane"/>
    <property type="evidence" value="ECO:0000318"/>
    <property type="project" value="GO_Central"/>
</dbReference>
<dbReference type="GO" id="GO:0032991">
    <property type="term" value="C:protein-containing complex"/>
    <property type="evidence" value="ECO:0000314"/>
    <property type="project" value="UniProtKB"/>
</dbReference>
<dbReference type="GO" id="GO:0001968">
    <property type="term" value="F:fibronectin binding"/>
    <property type="evidence" value="ECO:0000315"/>
    <property type="project" value="UniProtKB"/>
</dbReference>
<dbReference type="GO" id="GO:0043236">
    <property type="term" value="F:laminin binding"/>
    <property type="evidence" value="ECO:0000315"/>
    <property type="project" value="UniProtKB"/>
</dbReference>
<dbReference type="GO" id="GO:0030165">
    <property type="term" value="F:PDZ domain binding"/>
    <property type="evidence" value="ECO:0007669"/>
    <property type="project" value="Ensembl"/>
</dbReference>
<dbReference type="GO" id="GO:0043325">
    <property type="term" value="F:phosphatidylinositol-3,4-bisphosphate binding"/>
    <property type="evidence" value="ECO:0000314"/>
    <property type="project" value="UniProtKB"/>
</dbReference>
<dbReference type="GO" id="GO:0005543">
    <property type="term" value="F:phospholipid binding"/>
    <property type="evidence" value="ECO:0000318"/>
    <property type="project" value="GO_Central"/>
</dbReference>
<dbReference type="GO" id="GO:0001954">
    <property type="term" value="P:positive regulation of cell-matrix adhesion"/>
    <property type="evidence" value="ECO:0000315"/>
    <property type="project" value="UniProtKB"/>
</dbReference>
<dbReference type="CDD" id="cd13270">
    <property type="entry name" value="PH1_TAPP1_2"/>
    <property type="match status" value="1"/>
</dbReference>
<dbReference type="CDD" id="cd13271">
    <property type="entry name" value="PH2_TAPP1_2"/>
    <property type="match status" value="1"/>
</dbReference>
<dbReference type="FunFam" id="2.30.29.30:FF:000049">
    <property type="entry name" value="pleckstrin homology domain-containing family A member 1 isoform X1"/>
    <property type="match status" value="1"/>
</dbReference>
<dbReference type="FunFam" id="2.30.29.30:FF:000042">
    <property type="entry name" value="pleckstrin homology domain-containing family A member 1 isoform X2"/>
    <property type="match status" value="1"/>
</dbReference>
<dbReference type="Gene3D" id="2.30.29.30">
    <property type="entry name" value="Pleckstrin-homology domain (PH domain)/Phosphotyrosine-binding domain (PTB)"/>
    <property type="match status" value="2"/>
</dbReference>
<dbReference type="InterPro" id="IPR011993">
    <property type="entry name" value="PH-like_dom_sf"/>
</dbReference>
<dbReference type="InterPro" id="IPR001849">
    <property type="entry name" value="PH_domain"/>
</dbReference>
<dbReference type="InterPro" id="IPR051707">
    <property type="entry name" value="PI-Interact_SigTrans_Reg"/>
</dbReference>
<dbReference type="PANTHER" id="PTHR14336:SF5">
    <property type="entry name" value="PLECKSTRIN HOMOLOGY DOMAIN-CONTAINING FAMILY A MEMBER 2"/>
    <property type="match status" value="1"/>
</dbReference>
<dbReference type="PANTHER" id="PTHR14336">
    <property type="entry name" value="TANDEM PH DOMAIN CONTAINING PROTEIN"/>
    <property type="match status" value="1"/>
</dbReference>
<dbReference type="Pfam" id="PF00169">
    <property type="entry name" value="PH"/>
    <property type="match status" value="2"/>
</dbReference>
<dbReference type="SMART" id="SM00233">
    <property type="entry name" value="PH"/>
    <property type="match status" value="2"/>
</dbReference>
<dbReference type="SUPFAM" id="SSF50729">
    <property type="entry name" value="PH domain-like"/>
    <property type="match status" value="2"/>
</dbReference>
<dbReference type="PROSITE" id="PS50003">
    <property type="entry name" value="PH_DOMAIN"/>
    <property type="match status" value="2"/>
</dbReference>
<protein>
    <recommendedName>
        <fullName>Pleckstrin homology domain-containing family A member 2</fullName>
        <shortName>PH domain-containing family A member 2</shortName>
    </recommendedName>
    <alternativeName>
        <fullName>Tandem PH domain-containing protein 2</fullName>
        <shortName>TAPP-2</shortName>
    </alternativeName>
</protein>
<reference key="1">
    <citation type="journal article" date="2004" name="Nat. Genet.">
        <title>Complete sequencing and characterization of 21,243 full-length human cDNAs.</title>
        <authorList>
            <person name="Ota T."/>
            <person name="Suzuki Y."/>
            <person name="Nishikawa T."/>
            <person name="Otsuki T."/>
            <person name="Sugiyama T."/>
            <person name="Irie R."/>
            <person name="Wakamatsu A."/>
            <person name="Hayashi K."/>
            <person name="Sato H."/>
            <person name="Nagai K."/>
            <person name="Kimura K."/>
            <person name="Makita H."/>
            <person name="Sekine M."/>
            <person name="Obayashi M."/>
            <person name="Nishi T."/>
            <person name="Shibahara T."/>
            <person name="Tanaka T."/>
            <person name="Ishii S."/>
            <person name="Yamamoto J."/>
            <person name="Saito K."/>
            <person name="Kawai Y."/>
            <person name="Isono Y."/>
            <person name="Nakamura Y."/>
            <person name="Nagahari K."/>
            <person name="Murakami K."/>
            <person name="Yasuda T."/>
            <person name="Iwayanagi T."/>
            <person name="Wagatsuma M."/>
            <person name="Shiratori A."/>
            <person name="Sudo H."/>
            <person name="Hosoiri T."/>
            <person name="Kaku Y."/>
            <person name="Kodaira H."/>
            <person name="Kondo H."/>
            <person name="Sugawara M."/>
            <person name="Takahashi M."/>
            <person name="Kanda K."/>
            <person name="Yokoi T."/>
            <person name="Furuya T."/>
            <person name="Kikkawa E."/>
            <person name="Omura Y."/>
            <person name="Abe K."/>
            <person name="Kamihara K."/>
            <person name="Katsuta N."/>
            <person name="Sato K."/>
            <person name="Tanikawa M."/>
            <person name="Yamazaki M."/>
            <person name="Ninomiya K."/>
            <person name="Ishibashi T."/>
            <person name="Yamashita H."/>
            <person name="Murakawa K."/>
            <person name="Fujimori K."/>
            <person name="Tanai H."/>
            <person name="Kimata M."/>
            <person name="Watanabe M."/>
            <person name="Hiraoka S."/>
            <person name="Chiba Y."/>
            <person name="Ishida S."/>
            <person name="Ono Y."/>
            <person name="Takiguchi S."/>
            <person name="Watanabe S."/>
            <person name="Yosida M."/>
            <person name="Hotuta T."/>
            <person name="Kusano J."/>
            <person name="Kanehori K."/>
            <person name="Takahashi-Fujii A."/>
            <person name="Hara H."/>
            <person name="Tanase T.-O."/>
            <person name="Nomura Y."/>
            <person name="Togiya S."/>
            <person name="Komai F."/>
            <person name="Hara R."/>
            <person name="Takeuchi K."/>
            <person name="Arita M."/>
            <person name="Imose N."/>
            <person name="Musashino K."/>
            <person name="Yuuki H."/>
            <person name="Oshima A."/>
            <person name="Sasaki N."/>
            <person name="Aotsuka S."/>
            <person name="Yoshikawa Y."/>
            <person name="Matsunawa H."/>
            <person name="Ichihara T."/>
            <person name="Shiohata N."/>
            <person name="Sano S."/>
            <person name="Moriya S."/>
            <person name="Momiyama H."/>
            <person name="Satoh N."/>
            <person name="Takami S."/>
            <person name="Terashima Y."/>
            <person name="Suzuki O."/>
            <person name="Nakagawa S."/>
            <person name="Senoh A."/>
            <person name="Mizoguchi H."/>
            <person name="Goto Y."/>
            <person name="Shimizu F."/>
            <person name="Wakebe H."/>
            <person name="Hishigaki H."/>
            <person name="Watanabe T."/>
            <person name="Sugiyama A."/>
            <person name="Takemoto M."/>
            <person name="Kawakami B."/>
            <person name="Yamazaki M."/>
            <person name="Watanabe K."/>
            <person name="Kumagai A."/>
            <person name="Itakura S."/>
            <person name="Fukuzumi Y."/>
            <person name="Fujimori Y."/>
            <person name="Komiyama M."/>
            <person name="Tashiro H."/>
            <person name="Tanigami A."/>
            <person name="Fujiwara T."/>
            <person name="Ono T."/>
            <person name="Yamada K."/>
            <person name="Fujii Y."/>
            <person name="Ozaki K."/>
            <person name="Hirao M."/>
            <person name="Ohmori Y."/>
            <person name="Kawabata A."/>
            <person name="Hikiji T."/>
            <person name="Kobatake N."/>
            <person name="Inagaki H."/>
            <person name="Ikema Y."/>
            <person name="Okamoto S."/>
            <person name="Okitani R."/>
            <person name="Kawakami T."/>
            <person name="Noguchi S."/>
            <person name="Itoh T."/>
            <person name="Shigeta K."/>
            <person name="Senba T."/>
            <person name="Matsumura K."/>
            <person name="Nakajima Y."/>
            <person name="Mizuno T."/>
            <person name="Morinaga M."/>
            <person name="Sasaki M."/>
            <person name="Togashi T."/>
            <person name="Oyama M."/>
            <person name="Hata H."/>
            <person name="Watanabe M."/>
            <person name="Komatsu T."/>
            <person name="Mizushima-Sugano J."/>
            <person name="Satoh T."/>
            <person name="Shirai Y."/>
            <person name="Takahashi Y."/>
            <person name="Nakagawa K."/>
            <person name="Okumura K."/>
            <person name="Nagase T."/>
            <person name="Nomura N."/>
            <person name="Kikuchi H."/>
            <person name="Masuho Y."/>
            <person name="Yamashita R."/>
            <person name="Nakai K."/>
            <person name="Yada T."/>
            <person name="Nakamura Y."/>
            <person name="Ohara O."/>
            <person name="Isogai T."/>
            <person name="Sugano S."/>
        </authorList>
    </citation>
    <scope>NUCLEOTIDE SEQUENCE [LARGE SCALE MRNA]</scope>
</reference>
<reference key="2">
    <citation type="journal article" date="2006" name="Nature">
        <title>DNA sequence and analysis of human chromosome 8.</title>
        <authorList>
            <person name="Nusbaum C."/>
            <person name="Mikkelsen T.S."/>
            <person name="Zody M.C."/>
            <person name="Asakawa S."/>
            <person name="Taudien S."/>
            <person name="Garber M."/>
            <person name="Kodira C.D."/>
            <person name="Schueler M.G."/>
            <person name="Shimizu A."/>
            <person name="Whittaker C.A."/>
            <person name="Chang J.L."/>
            <person name="Cuomo C.A."/>
            <person name="Dewar K."/>
            <person name="FitzGerald M.G."/>
            <person name="Yang X."/>
            <person name="Allen N.R."/>
            <person name="Anderson S."/>
            <person name="Asakawa T."/>
            <person name="Blechschmidt K."/>
            <person name="Bloom T."/>
            <person name="Borowsky M.L."/>
            <person name="Butler J."/>
            <person name="Cook A."/>
            <person name="Corum B."/>
            <person name="DeArellano K."/>
            <person name="DeCaprio D."/>
            <person name="Dooley K.T."/>
            <person name="Dorris L. III"/>
            <person name="Engels R."/>
            <person name="Gloeckner G."/>
            <person name="Hafez N."/>
            <person name="Hagopian D.S."/>
            <person name="Hall J.L."/>
            <person name="Ishikawa S.K."/>
            <person name="Jaffe D.B."/>
            <person name="Kamat A."/>
            <person name="Kudoh J."/>
            <person name="Lehmann R."/>
            <person name="Lokitsang T."/>
            <person name="Macdonald P."/>
            <person name="Major J.E."/>
            <person name="Matthews C.D."/>
            <person name="Mauceli E."/>
            <person name="Menzel U."/>
            <person name="Mihalev A.H."/>
            <person name="Minoshima S."/>
            <person name="Murayama Y."/>
            <person name="Naylor J.W."/>
            <person name="Nicol R."/>
            <person name="Nguyen C."/>
            <person name="O'Leary S.B."/>
            <person name="O'Neill K."/>
            <person name="Parker S.C.J."/>
            <person name="Polley A."/>
            <person name="Raymond C.K."/>
            <person name="Reichwald K."/>
            <person name="Rodriguez J."/>
            <person name="Sasaki T."/>
            <person name="Schilhabel M."/>
            <person name="Siddiqui R."/>
            <person name="Smith C.L."/>
            <person name="Sneddon T.P."/>
            <person name="Talamas J.A."/>
            <person name="Tenzin P."/>
            <person name="Topham K."/>
            <person name="Venkataraman V."/>
            <person name="Wen G."/>
            <person name="Yamazaki S."/>
            <person name="Young S.K."/>
            <person name="Zeng Q."/>
            <person name="Zimmer A.R."/>
            <person name="Rosenthal A."/>
            <person name="Birren B.W."/>
            <person name="Platzer M."/>
            <person name="Shimizu N."/>
            <person name="Lander E.S."/>
        </authorList>
    </citation>
    <scope>NUCLEOTIDE SEQUENCE [LARGE SCALE GENOMIC DNA]</scope>
</reference>
<reference key="3">
    <citation type="journal article" date="2000" name="Biochem. J.">
        <title>Identification of pleckstrin-homology-domain-containing proteins with novel phosphoinositide-binding specificities.</title>
        <authorList>
            <person name="Dowler S.J."/>
            <person name="Currie R.A."/>
            <person name="Campbell D.G."/>
            <person name="Deak M."/>
            <person name="Kular G."/>
            <person name="Downes C.P."/>
            <person name="Alessi D.R."/>
        </authorList>
    </citation>
    <scope>NUCLEOTIDE SEQUENCE [MRNA] OF 1-304</scope>
</reference>
<reference key="4">
    <citation type="journal article" date="2008" name="J. Proteome Res.">
        <title>Combining protein-based IMAC, peptide-based IMAC, and MudPIT for efficient phosphoproteomic analysis.</title>
        <authorList>
            <person name="Cantin G.T."/>
            <person name="Yi W."/>
            <person name="Lu B."/>
            <person name="Park S.K."/>
            <person name="Xu T."/>
            <person name="Lee J.-D."/>
            <person name="Yates J.R. III"/>
        </authorList>
    </citation>
    <scope>PHOSPHORYLATION [LARGE SCALE ANALYSIS] AT SER-349</scope>
    <scope>IDENTIFICATION BY MASS SPECTROMETRY [LARGE SCALE ANALYSIS]</scope>
    <source>
        <tissue>Cervix carcinoma</tissue>
    </source>
</reference>
<reference key="5">
    <citation type="journal article" date="2008" name="Proc. Natl. Acad. Sci. U.S.A.">
        <title>A quantitative atlas of mitotic phosphorylation.</title>
        <authorList>
            <person name="Dephoure N."/>
            <person name="Zhou C."/>
            <person name="Villen J."/>
            <person name="Beausoleil S.A."/>
            <person name="Bakalarski C.E."/>
            <person name="Elledge S.J."/>
            <person name="Gygi S.P."/>
        </authorList>
    </citation>
    <scope>PHOSPHORYLATION [LARGE SCALE ANALYSIS] AT SER-184</scope>
    <scope>IDENTIFICATION BY MASS SPECTROMETRY [LARGE SCALE ANALYSIS]</scope>
    <source>
        <tissue>Cervix carcinoma</tissue>
    </source>
</reference>
<reference key="6">
    <citation type="journal article" date="2011" name="BMC Syst. Biol.">
        <title>Initial characterization of the human central proteome.</title>
        <authorList>
            <person name="Burkard T.R."/>
            <person name="Planyavsky M."/>
            <person name="Kaupe I."/>
            <person name="Breitwieser F.P."/>
            <person name="Buerckstuemmer T."/>
            <person name="Bennett K.L."/>
            <person name="Superti-Furga G."/>
            <person name="Colinge J."/>
        </authorList>
    </citation>
    <scope>IDENTIFICATION BY MASS SPECTROMETRY [LARGE SCALE ANALYSIS]</scope>
</reference>
<reference key="7">
    <citation type="journal article" date="2013" name="J. Proteome Res.">
        <title>Toward a comprehensive characterization of a human cancer cell phosphoproteome.</title>
        <authorList>
            <person name="Zhou H."/>
            <person name="Di Palma S."/>
            <person name="Preisinger C."/>
            <person name="Peng M."/>
            <person name="Polat A.N."/>
            <person name="Heck A.J."/>
            <person name="Mohammed S."/>
        </authorList>
    </citation>
    <scope>PHOSPHORYLATION [LARGE SCALE ANALYSIS] AT SER-184; SER-314 AND SER-349</scope>
    <scope>IDENTIFICATION BY MASS SPECTROMETRY [LARGE SCALE ANALYSIS]</scope>
    <source>
        <tissue>Cervix carcinoma</tissue>
        <tissue>Erythroleukemia</tissue>
    </source>
</reference>
<reference key="8">
    <citation type="journal article" date="2014" name="Nat. Struct. Mol. Biol.">
        <title>Uncovering global SUMOylation signaling networks in a site-specific manner.</title>
        <authorList>
            <person name="Hendriks I.A."/>
            <person name="D'Souza R.C."/>
            <person name="Yang B."/>
            <person name="Verlaan-de Vries M."/>
            <person name="Mann M."/>
            <person name="Vertegaal A.C."/>
        </authorList>
    </citation>
    <scope>SUMOYLATION [LARGE SCALE ANALYSIS] AT LYS-141</scope>
    <scope>IDENTIFICATION BY MASS SPECTROMETRY [LARGE SCALE ANALYSIS]</scope>
</reference>
<evidence type="ECO:0000250" key="1"/>
<evidence type="ECO:0000255" key="2">
    <source>
        <dbReference type="PROSITE-ProRule" id="PRU00145"/>
    </source>
</evidence>
<evidence type="ECO:0000256" key="3">
    <source>
        <dbReference type="SAM" id="MobiDB-lite"/>
    </source>
</evidence>
<evidence type="ECO:0000305" key="4"/>
<evidence type="ECO:0007744" key="5">
    <source>
    </source>
</evidence>
<evidence type="ECO:0007744" key="6">
    <source>
    </source>
</evidence>
<evidence type="ECO:0007744" key="7">
    <source>
    </source>
</evidence>
<evidence type="ECO:0007744" key="8">
    <source>
    </source>
</evidence>
<name>PKHA2_HUMAN</name>
<accession>Q9HB19</accession>
<accession>A8K727</accession>
<proteinExistence type="evidence at protein level"/>
<organism>
    <name type="scientific">Homo sapiens</name>
    <name type="common">Human</name>
    <dbReference type="NCBI Taxonomy" id="9606"/>
    <lineage>
        <taxon>Eukaryota</taxon>
        <taxon>Metazoa</taxon>
        <taxon>Chordata</taxon>
        <taxon>Craniata</taxon>
        <taxon>Vertebrata</taxon>
        <taxon>Euteleostomi</taxon>
        <taxon>Mammalia</taxon>
        <taxon>Eutheria</taxon>
        <taxon>Euarchontoglires</taxon>
        <taxon>Primates</taxon>
        <taxon>Haplorrhini</taxon>
        <taxon>Catarrhini</taxon>
        <taxon>Hominidae</taxon>
        <taxon>Homo</taxon>
    </lineage>
</organism>
<sequence length="425" mass="47245">MPYVDRQNRICGFLDIEEHENSGKFLRRYFILDTQANCLLWYMDNPQNLAMGAGAVGALQLTYISKVSIATPKQKPKTPFCFVINALSQRYFLQANDQKDMKDWVEALNQASKITVPKGGGLPMTTEVLKSLAAPPALEKKPQVAYKTEIIGGVVVHTPISQNGGDGQEGSEPGSHTILRRSQSYIPTSGCRASTGPPLIKSGYCVKQGNVRKSWKRRFFALDDFTICYFKCEQDREPLRTIFLKDVLKTHECLVKSGDLLMRDNLFEIITSSRTFYVQADSPEDMHSWIKEIGAAVQALKCHPRETSFSRSISLTRPGSSSLSSGPNSILCRGRPPLEEKKALCKAPSVASSWQPWTPVPQAGEKLLPPGDTSEDSLFTPRPGEGSAPGVLPSSRIRHRSEPQHPKEKPFMFNLDDENIRTSDV</sequence>